<name>PALS1_PONAB</name>
<sequence length="675" mass="77234">MTTSHMNGHVTEESDSEVKNVDLASPEEHQKHREMAVDCPGDLGTRMMPIRRSAQLERIRQQQEDMRRRREEEGKKQELDLNSSMRLKKLAQIPPKTGIDNPMFDTEEGIVLESPHYAVKILEIEDLFSSLKHIQHTLIDSQSQEDISLLLQLVQNKGFQNAFKIHNAITVHMNKASPPFPLISNAQDLAQEVQTVLKPVHHKEGQELTALLNTPHIQALLLAHDKVAEQEMQLEPITDERVYESIGQYGGETVKIVRIEKARDIPLGATVRNEMDSVIISRIVKGGAAEKSGLLHEGDEVLEINGIEIRGKDVNEVFDLLADMHGTLTFVLIPSQQIKPPPAKETVIHVKAHFDYDPSDDPYVPCRELGLSFQKGDILHVISQEDPNWWQAYREGDEDNQPLAGLVPGKSFQQQREAMKQTIEEDKEPEKSGKLWCAKKNKKKRKKVLYNANKNDDYDNEEILTYEEMSLYHQPANRKRPIILIGPQNCGQNELRQRLMNKEKDRFASAVPHTTRSRRDQEVAGRDYHFVSRQAFEADIAAGKFIEHGEFEKNLYGTSIDSVRQVINSGKICLLSLRTQSLKTLRNSDLKPYIIFIAPPSQERLRALLAKEGKNPKPEELREIIEKTREMEQNNGHYFDTAIVNSDLDKAYQELLRLINKLDTEPQWVPSTWLR</sequence>
<organism>
    <name type="scientific">Pongo abelii</name>
    <name type="common">Sumatran orangutan</name>
    <name type="synonym">Pongo pygmaeus abelii</name>
    <dbReference type="NCBI Taxonomy" id="9601"/>
    <lineage>
        <taxon>Eukaryota</taxon>
        <taxon>Metazoa</taxon>
        <taxon>Chordata</taxon>
        <taxon>Craniata</taxon>
        <taxon>Vertebrata</taxon>
        <taxon>Euteleostomi</taxon>
        <taxon>Mammalia</taxon>
        <taxon>Eutheria</taxon>
        <taxon>Euarchontoglires</taxon>
        <taxon>Primates</taxon>
        <taxon>Haplorrhini</taxon>
        <taxon>Catarrhini</taxon>
        <taxon>Hominidae</taxon>
        <taxon>Pongo</taxon>
    </lineage>
</organism>
<comment type="function">
    <text evidence="2 4 5">Plays a role in tight junction biogenesis and in the establishment of cell polarity in epithelial cells (By similarity). Also involved in adherens junction biogenesis by ensuring correct localization of the exocyst complex protein EXOC4/SEC8 which allows trafficking of adherens junction structural component CDH1 to the cell surface (By similarity). Plays a role through its interaction with CDH5 in vascular lumen formation and endothelial membrane polarity (By similarity). Required during embryonic and postnatal retinal development (By similarity). Required for the maintenance of cerebellar progenitor cells in an undifferentiated proliferative state, preventing premature differentiation, and is required for cerebellar histogenesis, fissure formation, cerebellar layer organization and cortical development (By similarity). Plays a role in neuronal progenitor cell survival, potentially via promotion of mTOR signaling (By similarity). Plays a role in the radial and longitudinal extension of the myelin sheath in Schwann cells (By similarity). May modulate SC6A1/GAT1-mediated GABA uptake by stabilizing the transporter (By similarity). May play a role in the T-cell receptor-mediated activation of NF-kappa-B (By similarity). Required for localization of EZR to the apical membrane of parietal cells and may play a role in the dynamic remodeling of the apical cytoskeleton (By similarity). Required for the normal polarized localization of the vesicular marker STX4 (By similarity). Required for the correct trafficking of the myelin proteins PMP22 and MAG (By similarity). Involved in promoting phosphorylation and cytoplasmic retention of transcriptional coactivators YAP1 and WWTR1/TAZ which leads to suppression of TGFB1-dependent transcription of target genes such as CCN2/CTGF, SERPINE1/PAI1, SNAI1/SNAIL1 and SMAD7 (By similarity).</text>
</comment>
<comment type="subunit">
    <text evidence="3 4 5">Heterodimer with MPP1 (By similarity). Forms a heterotrimeric complex composed of PALS1, LIN7B and PATJ; the N-terminal L27 domain of PALS1 interacts with the L27 domain of PATJ and the C-terminal L27 domain of PALS1 interacts with the L27 domain of LIN7B (By similarity). Component of a complex composed of PALS1, CRB1 and MPP4 (By similarity). Component of a complex whose core is composed of ARHGAP17, AMOT, PALS1, PATJ and PARD3/PAR3 (By similarity). Component of a complex composed of PALS1, CRB1 and EPB41L5. Within the complex, interacts (via HOOK domain) with EPB41L5 (via FERM domain), and interacts with CRB1 (via intracellular domain) (By similarity). Component of a complex composed of PALS1, MPP3 and CRB1; PALS1 acts as a bridging protein between MPP3 (via guanylate kinase-like domain) and CRB1 (By similarity). Component of a complex composed of CRB3, PALS1 and PATJ (By similarity). As part of the Crumbs complex; interacts with WWP1, the interaction is enhanced by AMOTL2 and facilitates WWP1 localization to the plasma membrane (By similarity). The Crumbs complex promotes monoubiquitination of AMOTL2 by WWP1, which activates the Hippo signaling pathway (By similarity). Interacts (via PDZ domain) with PATJ (via N-terminus). Interacts with EZR (By similarity). Interacts (via PDZ domain) with CRB1 (via C-terminal ERLI motif) (By similarity). While the PDZ domain is sufficient for interaction with CRB1, the adjacent SH3 and guanylate kinase-like domains are likely to contribute to a high affinity interaction (By similarity). Interacts with WWTR1/TAZ (via WW domain) (By similarity). Interacts with MPP7 (By similarity). Interacts (via PDZ domain) with CRB3 (via C-terminus) (By similarity). Interacts with LIN7C. Interacts with MPDZ. Interacts with PARD6B. Interacts with SC6A1. Interacts with CDH5; the interaction promotes PALS1 localization to cell junctions and is required for CDH5-mediated vascular lumen formation and endothelial cell (By similarity). Interacts with NPHP1 (via coiled coil and SH3 domains) (By similarity). Interacts with NPHP4 (By similarity). Interacts with CRB2 (By similarity).</text>
</comment>
<comment type="subcellular location">
    <subcellularLocation>
        <location evidence="4">Golgi apparatus</location>
    </subcellularLocation>
    <subcellularLocation>
        <location evidence="1">Cell membrane</location>
        <topology evidence="1">Peripheral membrane protein</topology>
    </subcellularLocation>
    <subcellularLocation>
        <location evidence="1">Endomembrane system</location>
        <topology evidence="1">Peripheral membrane protein</topology>
    </subcellularLocation>
    <subcellularLocation>
        <location evidence="1">Cell junction</location>
        <location evidence="1">Tight junction</location>
    </subcellularLocation>
    <subcellularLocation>
        <location evidence="4">Cell junction</location>
        <location evidence="4">Adherens junction</location>
    </subcellularLocation>
    <subcellularLocation>
        <location evidence="5">Cell projection</location>
        <location evidence="5">Axon</location>
    </subcellularLocation>
    <subcellularLocation>
        <location evidence="5">Perikaryon</location>
    </subcellularLocation>
    <subcellularLocation>
        <location evidence="4">Apical cell membrane</location>
    </subcellularLocation>
    <text evidence="4 5">Localized to the tight junctions of epithelial cells (By similarity). Localized to the Golgi apparatus in T lymphocytes (By similarity). Localized to a subset of intracellular vesicles (By similarity). Localized to the Purkinje cell body and axon (By similarity). Localized to intercellular junctions in vascular endothelial cells (By similarity). Localized to Schmidt-Lanterman incisures, the adaxonal domain, and the inner part of paranodal loops in myelinating Schwann cells of the sciatic nerve (By similarity). Localized to apical membrane domains of the outer limiting membrane (OLM) junctions in the retina (By similarity). Colocalizes with CRB1 at the OLM, apical to the adherens junction (By similarity). Colocalizes with MPP1 in the retina at the OLM (By similarity). Colocalizes with MPP3 to the subapical region of adherens junctions in the retina OLM (By similarity).</text>
</comment>
<comment type="domain">
    <text evidence="5">The L27 domain 1 functions in targeting to the tight junctions by binding to and stabilizing PATJ.</text>
</comment>
<comment type="domain">
    <text evidence="5">The PDZ domain binds to the C-terminus of SC6A1.</text>
</comment>
<comment type="similarity">
    <text evidence="11">Belongs to the MAGUK family.</text>
</comment>
<protein>
    <recommendedName>
        <fullName evidence="11">Protein PALS1</fullName>
    </recommendedName>
    <alternativeName>
        <fullName>MAGUK p55 subfamily member 5</fullName>
    </alternativeName>
    <alternativeName>
        <fullName>Protein associated with Lin-7 1</fullName>
    </alternativeName>
</protein>
<keyword id="KW-0067">ATP-binding</keyword>
<keyword id="KW-0965">Cell junction</keyword>
<keyword id="KW-1003">Cell membrane</keyword>
<keyword id="KW-0966">Cell projection</keyword>
<keyword id="KW-0333">Golgi apparatus</keyword>
<keyword id="KW-0472">Membrane</keyword>
<keyword id="KW-0547">Nucleotide-binding</keyword>
<keyword id="KW-0597">Phosphoprotein</keyword>
<keyword id="KW-1185">Reference proteome</keyword>
<keyword id="KW-0677">Repeat</keyword>
<keyword id="KW-0728">SH3 domain</keyword>
<keyword id="KW-0796">Tight junction</keyword>
<reference key="1">
    <citation type="submission" date="2004-11" db="EMBL/GenBank/DDBJ databases">
        <authorList>
            <consortium name="The German cDNA consortium"/>
        </authorList>
    </citation>
    <scope>NUCLEOTIDE SEQUENCE [LARGE SCALE MRNA]</scope>
    <source>
        <tissue>Kidney</tissue>
    </source>
</reference>
<dbReference type="EMBL" id="CR857851">
    <property type="protein sequence ID" value="CAH90105.1"/>
    <property type="molecule type" value="mRNA"/>
</dbReference>
<dbReference type="RefSeq" id="NP_001125010.1">
    <property type="nucleotide sequence ID" value="NM_001131538.1"/>
</dbReference>
<dbReference type="BMRB" id="Q5RDQ2"/>
<dbReference type="SMR" id="Q5RDQ2"/>
<dbReference type="FunCoup" id="Q5RDQ2">
    <property type="interactions" value="912"/>
</dbReference>
<dbReference type="STRING" id="9601.ENSPPYP00000006727"/>
<dbReference type="GeneID" id="100171889"/>
<dbReference type="KEGG" id="pon:100171889"/>
<dbReference type="CTD" id="64398"/>
<dbReference type="eggNOG" id="KOG0609">
    <property type="taxonomic scope" value="Eukaryota"/>
</dbReference>
<dbReference type="InParanoid" id="Q5RDQ2"/>
<dbReference type="OrthoDB" id="43580at2759"/>
<dbReference type="Proteomes" id="UP000001595">
    <property type="component" value="Unplaced"/>
</dbReference>
<dbReference type="GO" id="GO:0005912">
    <property type="term" value="C:adherens junction"/>
    <property type="evidence" value="ECO:0000250"/>
    <property type="project" value="UniProtKB"/>
</dbReference>
<dbReference type="GO" id="GO:0016324">
    <property type="term" value="C:apical plasma membrane"/>
    <property type="evidence" value="ECO:0007669"/>
    <property type="project" value="UniProtKB-SubCell"/>
</dbReference>
<dbReference type="GO" id="GO:0030424">
    <property type="term" value="C:axon"/>
    <property type="evidence" value="ECO:0007669"/>
    <property type="project" value="UniProtKB-SubCell"/>
</dbReference>
<dbReference type="GO" id="GO:0005923">
    <property type="term" value="C:bicellular tight junction"/>
    <property type="evidence" value="ECO:0007669"/>
    <property type="project" value="UniProtKB-SubCell"/>
</dbReference>
<dbReference type="GO" id="GO:0005794">
    <property type="term" value="C:Golgi apparatus"/>
    <property type="evidence" value="ECO:0007669"/>
    <property type="project" value="UniProtKB-SubCell"/>
</dbReference>
<dbReference type="GO" id="GO:0043204">
    <property type="term" value="C:perikaryon"/>
    <property type="evidence" value="ECO:0007669"/>
    <property type="project" value="UniProtKB-SubCell"/>
</dbReference>
<dbReference type="GO" id="GO:0005524">
    <property type="term" value="F:ATP binding"/>
    <property type="evidence" value="ECO:0007669"/>
    <property type="project" value="UniProtKB-KW"/>
</dbReference>
<dbReference type="GO" id="GO:0021954">
    <property type="term" value="P:central nervous system neuron development"/>
    <property type="evidence" value="ECO:0000250"/>
    <property type="project" value="UniProtKB"/>
</dbReference>
<dbReference type="GO" id="GO:0021987">
    <property type="term" value="P:cerebral cortex development"/>
    <property type="evidence" value="ECO:0000250"/>
    <property type="project" value="UniProtKB"/>
</dbReference>
<dbReference type="GO" id="GO:0017015">
    <property type="term" value="P:regulation of transforming growth factor beta receptor signaling pathway"/>
    <property type="evidence" value="ECO:0000250"/>
    <property type="project" value="UniProtKB"/>
</dbReference>
<dbReference type="CDD" id="cd00071">
    <property type="entry name" value="GMPK"/>
    <property type="match status" value="1"/>
</dbReference>
<dbReference type="CDD" id="cd06798">
    <property type="entry name" value="PDZ_MPP5-like"/>
    <property type="match status" value="1"/>
</dbReference>
<dbReference type="CDD" id="cd12036">
    <property type="entry name" value="SH3_MPP5"/>
    <property type="match status" value="1"/>
</dbReference>
<dbReference type="FunFam" id="2.30.30.40:FF:000105">
    <property type="entry name" value="MAGUK p55 subfamily member 5"/>
    <property type="match status" value="1"/>
</dbReference>
<dbReference type="FunFam" id="2.30.42.10:FF:000088">
    <property type="entry name" value="MAGUK p55 subfamily member 5"/>
    <property type="match status" value="1"/>
</dbReference>
<dbReference type="FunFam" id="3.40.50.300:FF:000469">
    <property type="entry name" value="MAGUK p55 subfamily member 5"/>
    <property type="match status" value="1"/>
</dbReference>
<dbReference type="Gene3D" id="2.30.42.10">
    <property type="match status" value="1"/>
</dbReference>
<dbReference type="Gene3D" id="1.10.287.650">
    <property type="entry name" value="L27 domain"/>
    <property type="match status" value="2"/>
</dbReference>
<dbReference type="Gene3D" id="3.40.50.300">
    <property type="entry name" value="P-loop containing nucleotide triphosphate hydrolases"/>
    <property type="match status" value="1"/>
</dbReference>
<dbReference type="Gene3D" id="2.30.30.40">
    <property type="entry name" value="SH3 Domains"/>
    <property type="match status" value="1"/>
</dbReference>
<dbReference type="InterPro" id="IPR008145">
    <property type="entry name" value="GK/Ca_channel_bsu"/>
</dbReference>
<dbReference type="InterPro" id="IPR008144">
    <property type="entry name" value="Guanylate_kin-like_dom"/>
</dbReference>
<dbReference type="InterPro" id="IPR020590">
    <property type="entry name" value="Guanylate_kinase_CS"/>
</dbReference>
<dbReference type="InterPro" id="IPR014775">
    <property type="entry name" value="L27_C"/>
</dbReference>
<dbReference type="InterPro" id="IPR004172">
    <property type="entry name" value="L27_dom"/>
</dbReference>
<dbReference type="InterPro" id="IPR036892">
    <property type="entry name" value="L27_dom_sf"/>
</dbReference>
<dbReference type="InterPro" id="IPR015145">
    <property type="entry name" value="L27_N"/>
</dbReference>
<dbReference type="InterPro" id="IPR050716">
    <property type="entry name" value="MAGUK"/>
</dbReference>
<dbReference type="InterPro" id="IPR035601">
    <property type="entry name" value="MPP5_SH3"/>
</dbReference>
<dbReference type="InterPro" id="IPR027417">
    <property type="entry name" value="P-loop_NTPase"/>
</dbReference>
<dbReference type="InterPro" id="IPR001478">
    <property type="entry name" value="PDZ"/>
</dbReference>
<dbReference type="InterPro" id="IPR036034">
    <property type="entry name" value="PDZ_sf"/>
</dbReference>
<dbReference type="InterPro" id="IPR036028">
    <property type="entry name" value="SH3-like_dom_sf"/>
</dbReference>
<dbReference type="InterPro" id="IPR001452">
    <property type="entry name" value="SH3_domain"/>
</dbReference>
<dbReference type="PANTHER" id="PTHR23122">
    <property type="entry name" value="MEMBRANE-ASSOCIATED GUANYLATE KINASE MAGUK"/>
    <property type="match status" value="1"/>
</dbReference>
<dbReference type="Pfam" id="PF00625">
    <property type="entry name" value="Guanylate_kin"/>
    <property type="match status" value="1"/>
</dbReference>
<dbReference type="Pfam" id="PF02828">
    <property type="entry name" value="L27"/>
    <property type="match status" value="1"/>
</dbReference>
<dbReference type="Pfam" id="PF09060">
    <property type="entry name" value="L27_N"/>
    <property type="match status" value="1"/>
</dbReference>
<dbReference type="Pfam" id="PF00595">
    <property type="entry name" value="PDZ"/>
    <property type="match status" value="1"/>
</dbReference>
<dbReference type="Pfam" id="PF07653">
    <property type="entry name" value="SH3_2"/>
    <property type="match status" value="1"/>
</dbReference>
<dbReference type="SMART" id="SM00072">
    <property type="entry name" value="GuKc"/>
    <property type="match status" value="1"/>
</dbReference>
<dbReference type="SMART" id="SM00569">
    <property type="entry name" value="L27"/>
    <property type="match status" value="2"/>
</dbReference>
<dbReference type="SMART" id="SM00228">
    <property type="entry name" value="PDZ"/>
    <property type="match status" value="1"/>
</dbReference>
<dbReference type="SMART" id="SM00326">
    <property type="entry name" value="SH3"/>
    <property type="match status" value="1"/>
</dbReference>
<dbReference type="SUPFAM" id="SSF101288">
    <property type="entry name" value="L27 domain"/>
    <property type="match status" value="2"/>
</dbReference>
<dbReference type="SUPFAM" id="SSF52540">
    <property type="entry name" value="P-loop containing nucleoside triphosphate hydrolases"/>
    <property type="match status" value="1"/>
</dbReference>
<dbReference type="SUPFAM" id="SSF50156">
    <property type="entry name" value="PDZ domain-like"/>
    <property type="match status" value="1"/>
</dbReference>
<dbReference type="SUPFAM" id="SSF50044">
    <property type="entry name" value="SH3-domain"/>
    <property type="match status" value="1"/>
</dbReference>
<dbReference type="PROSITE" id="PS00856">
    <property type="entry name" value="GUANYLATE_KINASE_1"/>
    <property type="match status" value="1"/>
</dbReference>
<dbReference type="PROSITE" id="PS50052">
    <property type="entry name" value="GUANYLATE_KINASE_2"/>
    <property type="match status" value="1"/>
</dbReference>
<dbReference type="PROSITE" id="PS51022">
    <property type="entry name" value="L27"/>
    <property type="match status" value="2"/>
</dbReference>
<dbReference type="PROSITE" id="PS50106">
    <property type="entry name" value="PDZ"/>
    <property type="match status" value="1"/>
</dbReference>
<dbReference type="PROSITE" id="PS50002">
    <property type="entry name" value="SH3"/>
    <property type="match status" value="1"/>
</dbReference>
<gene>
    <name evidence="4" type="primary">PALS1</name>
    <name type="synonym">MPP5</name>
</gene>
<proteinExistence type="evidence at transcript level"/>
<evidence type="ECO:0000250" key="1"/>
<evidence type="ECO:0000250" key="2">
    <source>
        <dbReference type="UniProtKB" id="B4F7E7"/>
    </source>
</evidence>
<evidence type="ECO:0000250" key="3">
    <source>
        <dbReference type="UniProtKB" id="E2QY99"/>
    </source>
</evidence>
<evidence type="ECO:0000250" key="4">
    <source>
        <dbReference type="UniProtKB" id="Q8N3R9"/>
    </source>
</evidence>
<evidence type="ECO:0000250" key="5">
    <source>
        <dbReference type="UniProtKB" id="Q9JLB2"/>
    </source>
</evidence>
<evidence type="ECO:0000255" key="6">
    <source>
        <dbReference type="PROSITE-ProRule" id="PRU00100"/>
    </source>
</evidence>
<evidence type="ECO:0000255" key="7">
    <source>
        <dbReference type="PROSITE-ProRule" id="PRU00143"/>
    </source>
</evidence>
<evidence type="ECO:0000255" key="8">
    <source>
        <dbReference type="PROSITE-ProRule" id="PRU00192"/>
    </source>
</evidence>
<evidence type="ECO:0000255" key="9">
    <source>
        <dbReference type="PROSITE-ProRule" id="PRU00365"/>
    </source>
</evidence>
<evidence type="ECO:0000256" key="10">
    <source>
        <dbReference type="SAM" id="MobiDB-lite"/>
    </source>
</evidence>
<evidence type="ECO:0000305" key="11"/>
<accession>Q5RDQ2</accession>
<feature type="chain" id="PRO_0000094582" description="Protein PALS1">
    <location>
        <begin position="1"/>
        <end position="675"/>
    </location>
</feature>
<feature type="domain" description="L27 1" evidence="9">
    <location>
        <begin position="120"/>
        <end position="177"/>
    </location>
</feature>
<feature type="domain" description="L27 2" evidence="9">
    <location>
        <begin position="179"/>
        <end position="235"/>
    </location>
</feature>
<feature type="domain" description="PDZ" evidence="7">
    <location>
        <begin position="256"/>
        <end position="336"/>
    </location>
</feature>
<feature type="domain" description="SH3" evidence="8">
    <location>
        <begin position="345"/>
        <end position="417"/>
    </location>
</feature>
<feature type="domain" description="Guanylate kinase-like" evidence="6">
    <location>
        <begin position="479"/>
        <end position="660"/>
    </location>
</feature>
<feature type="region of interest" description="Required for the correct localization of PALS1 and PATJ at cell-cell contacts and the normal formation of tight junctions and adherens junctions" evidence="5">
    <location>
        <begin position="1"/>
        <end position="345"/>
    </location>
</feature>
<feature type="region of interest" description="Disordered" evidence="10">
    <location>
        <begin position="1"/>
        <end position="34"/>
    </location>
</feature>
<feature type="region of interest" description="Interaction with PARD6B" evidence="5">
    <location>
        <begin position="21"/>
        <end position="140"/>
    </location>
</feature>
<feature type="region of interest" description="Disordered" evidence="10">
    <location>
        <begin position="51"/>
        <end position="78"/>
    </location>
</feature>
<feature type="region of interest" description="Interaction with LIN7C" evidence="5">
    <location>
        <begin position="181"/>
        <end position="243"/>
    </location>
</feature>
<feature type="compositionally biased region" description="Basic and acidic residues" evidence="10">
    <location>
        <begin position="10"/>
        <end position="34"/>
    </location>
</feature>
<feature type="compositionally biased region" description="Basic and acidic residues" evidence="10">
    <location>
        <begin position="54"/>
        <end position="78"/>
    </location>
</feature>
<feature type="binding site" evidence="6">
    <location>
        <begin position="486"/>
        <end position="493"/>
    </location>
    <ligand>
        <name>ATP</name>
        <dbReference type="ChEBI" id="CHEBI:30616"/>
    </ligand>
</feature>
<feature type="modified residue" description="Phosphoserine" evidence="4">
    <location>
        <position position="14"/>
    </location>
</feature>
<feature type="modified residue" description="Phosphoserine" evidence="4">
    <location>
        <position position="25"/>
    </location>
</feature>
<feature type="modified residue" description="Phosphoserine" evidence="4">
    <location>
        <position position="83"/>
    </location>
</feature>
<feature type="modified residue" description="Phosphoserine" evidence="4">
    <location>
        <position position="84"/>
    </location>
</feature>